<comment type="function">
    <text evidence="1 3 10">Functions as a Na(+)-independent bidirectional multispecific transporter (PubMed:12065749). Contributes to the renal and hepatic elimination of endogenous organic compounds from the systemic circulation into the urine and bile, respectively (PubMed:12065749). Capable of transporting a wide range of purine and pyrimidine nucleobases, nucleosides, and nucleotides with cGMP, 2'deoxyguanosine and GMP being the preferred substrates (By similarity). Functions as a pH- and chloride-independent cGMP bidirectional facilitative transporter that can regulate both intracellular and extracellular levels of cGMP and may be involved in cGMP signaling pathways (By similarity). Mediates orotate/glutamate bidirectional exchange and most likely display a physiological role in hepatic release of glutamate into the blood (By similarity). Involved in renal secretion and possible reabsorption of creatinine (By similarity). Able to uptake prostaglandin E2 (PGE2) and may contribute to PGE2 renal excretion (Probable). Also transports alpha-ketoglutarate and urate (PubMed:12065749). Unlike human hortolog, able to transport glutarate (PubMed:12065749). Apart from the orotate/glutamate exchange, the counterions for the uptake of other SLC22A7/OAT2 substrates remain to be identified (By similarity).</text>
</comment>
<comment type="catalytic activity">
    <reaction evidence="1">
        <text>orotate(out) + L-glutamate(in) = orotate(in) + L-glutamate(out)</text>
        <dbReference type="Rhea" id="RHEA:72043"/>
        <dbReference type="ChEBI" id="CHEBI:29985"/>
        <dbReference type="ChEBI" id="CHEBI:30839"/>
    </reaction>
</comment>
<comment type="catalytic activity">
    <reaction evidence="1">
        <text>3',5'-cyclic GMP(in) = 3',5'-cyclic GMP(out)</text>
        <dbReference type="Rhea" id="RHEA:76207"/>
        <dbReference type="ChEBI" id="CHEBI:57746"/>
    </reaction>
</comment>
<comment type="catalytic activity">
    <reaction evidence="1">
        <text>GMP(in) = GMP(out)</text>
        <dbReference type="Rhea" id="RHEA:76211"/>
        <dbReference type="ChEBI" id="CHEBI:58115"/>
    </reaction>
</comment>
<comment type="catalytic activity">
    <reaction evidence="1">
        <text>2'-deoxyguanosine(in) = 2'-deoxyguanosine(out)</text>
        <dbReference type="Rhea" id="RHEA:76215"/>
        <dbReference type="ChEBI" id="CHEBI:17172"/>
    </reaction>
</comment>
<comment type="catalytic activity">
    <reaction evidence="1">
        <text>GDP(in) = GDP(out)</text>
        <dbReference type="Rhea" id="RHEA:76219"/>
        <dbReference type="ChEBI" id="CHEBI:58189"/>
    </reaction>
</comment>
<comment type="catalytic activity">
    <reaction evidence="1">
        <text>guanosine(in) = guanosine(out)</text>
        <dbReference type="Rhea" id="RHEA:75371"/>
        <dbReference type="ChEBI" id="CHEBI:16750"/>
    </reaction>
</comment>
<comment type="catalytic activity">
    <reaction evidence="1">
        <text>GTP(in) = GTP(out)</text>
        <dbReference type="Rhea" id="RHEA:75787"/>
        <dbReference type="ChEBI" id="CHEBI:37565"/>
    </reaction>
</comment>
<comment type="catalytic activity">
    <reaction evidence="1">
        <text>3',5'-cyclic AMP(in) = 3',5'-cyclic AMP(out)</text>
        <dbReference type="Rhea" id="RHEA:76223"/>
        <dbReference type="ChEBI" id="CHEBI:58165"/>
    </reaction>
</comment>
<comment type="catalytic activity">
    <reaction evidence="1">
        <text>creatinine(in) = creatinine(out)</text>
        <dbReference type="Rhea" id="RHEA:74539"/>
        <dbReference type="ChEBI" id="CHEBI:16737"/>
    </reaction>
</comment>
<comment type="catalytic activity">
    <reaction evidence="3 4">
        <text>prostaglandin E2(out) = prostaglandin E2(in)</text>
        <dbReference type="Rhea" id="RHEA:50984"/>
        <dbReference type="ChEBI" id="CHEBI:606564"/>
    </reaction>
</comment>
<comment type="catalytic activity">
    <reaction evidence="3">
        <text>2-oxoglutarate(in) = 2-oxoglutarate(out)</text>
        <dbReference type="Rhea" id="RHEA:76231"/>
        <dbReference type="ChEBI" id="CHEBI:16810"/>
    </reaction>
</comment>
<comment type="catalytic activity">
    <reaction evidence="3">
        <text>glutarate(in) = glutarate(out)</text>
        <dbReference type="Rhea" id="RHEA:76251"/>
        <dbReference type="ChEBI" id="CHEBI:30921"/>
    </reaction>
</comment>
<comment type="catalytic activity">
    <reaction evidence="1">
        <text>urate(out) = urate(in)</text>
        <dbReference type="Rhea" id="RHEA:60368"/>
        <dbReference type="ChEBI" id="CHEBI:17775"/>
    </reaction>
</comment>
<comment type="catalytic activity">
    <reaction evidence="1">
        <text>estrone 3-sulfate(out) = estrone 3-sulfate(in)</text>
        <dbReference type="Rhea" id="RHEA:71835"/>
        <dbReference type="ChEBI" id="CHEBI:60050"/>
    </reaction>
</comment>
<comment type="biophysicochemical properties">
    <kinetics>
        <KM evidence="3">15.8 uM for glutarate</KM>
        <KM evidence="3">0.0052 uM for prostaglandin E2</KM>
    </kinetics>
</comment>
<comment type="subcellular location">
    <subcellularLocation>
        <location evidence="1">Basolateral cell membrane</location>
        <topology evidence="1">Multi-pass membrane protein</topology>
    </subcellularLocation>
    <subcellularLocation>
        <location evidence="4">Apical cell membrane</location>
        <topology evidence="9">Multi-pass membrane protein</topology>
    </subcellularLocation>
    <subcellularLocation>
        <location evidence="1">Cell membrane</location>
        <topology evidence="9">Multi-pass membrane protein</topology>
    </subcellularLocation>
    <text evidence="4">Apical side of the renal tubule.</text>
</comment>
<comment type="alternative products">
    <event type="alternative splicing"/>
    <isoform>
        <id>Q91WU2-1</id>
        <name>1</name>
        <sequence type="displayed"/>
    </isoform>
    <isoform>
        <id>Q91WU2-2</id>
        <name>2</name>
        <sequence type="described" ref="VSP_030995 VSP_030996"/>
    </isoform>
</comment>
<comment type="tissue specificity">
    <text evidence="3 4 5">Abundant expression in male and female kidney (PubMed:12065749). In kidney, expressed at the brush border of the proximal tubule S3 segment (S3) in the outer stripe and medullary rays (PubMed:16256982, PubMed:16885152). In kidney, expression is higher in female than male (PubMed:16885152). Also expressed in female liver (PubMed:12065749).</text>
</comment>
<comment type="miscellaneous">
    <text evidence="4">Involved in the uptake of clinically used drugs such as bumetanide, and contributes to renal and hepatic drug elimination.</text>
</comment>
<comment type="similarity">
    <text evidence="9">Belongs to the major facilitator (TC 2.A.1) superfamily. Organic cation transporter (TC 2.A.1.19) family.</text>
</comment>
<protein>
    <recommendedName>
        <fullName evidence="8">Solute carrier family 22 member 7</fullName>
    </recommendedName>
    <alternativeName>
        <fullName evidence="7">Organic anion transporter 2</fullName>
        <shortName evidence="7">mOAT2</shortName>
    </alternativeName>
</protein>
<proteinExistence type="evidence at protein level"/>
<reference key="1">
    <citation type="journal article" date="2002" name="Mol. Pharmacol.">
        <title>Isolation, characterization and differential gene expression of multispecific organic anion transporter 2 in mice.</title>
        <authorList>
            <person name="Kobayashi Y."/>
            <person name="Ohshiro N."/>
            <person name="Shibusawa A."/>
            <person name="Sasaki T."/>
            <person name="Tokuyama S."/>
            <person name="Sekine T."/>
            <person name="Endou H."/>
            <person name="Yamamoto T."/>
        </authorList>
    </citation>
    <scope>NUCLEOTIDE SEQUENCE [MRNA] (ISOFORM 1)</scope>
    <scope>FUNCTION</scope>
    <scope>TRANSPORTER ACTIVITY</scope>
    <scope>BIOPHYSICOCHEMICAL PROPERTIES</scope>
    <scope>TISSUE SPECIFICITY</scope>
    <source>
        <tissue>Kidney</tissue>
    </source>
</reference>
<reference key="2">
    <citation type="journal article" date="2005" name="Science">
        <title>The transcriptional landscape of the mammalian genome.</title>
        <authorList>
            <person name="Carninci P."/>
            <person name="Kasukawa T."/>
            <person name="Katayama S."/>
            <person name="Gough J."/>
            <person name="Frith M.C."/>
            <person name="Maeda N."/>
            <person name="Oyama R."/>
            <person name="Ravasi T."/>
            <person name="Lenhard B."/>
            <person name="Wells C."/>
            <person name="Kodzius R."/>
            <person name="Shimokawa K."/>
            <person name="Bajic V.B."/>
            <person name="Brenner S.E."/>
            <person name="Batalov S."/>
            <person name="Forrest A.R."/>
            <person name="Zavolan M."/>
            <person name="Davis M.J."/>
            <person name="Wilming L.G."/>
            <person name="Aidinis V."/>
            <person name="Allen J.E."/>
            <person name="Ambesi-Impiombato A."/>
            <person name="Apweiler R."/>
            <person name="Aturaliya R.N."/>
            <person name="Bailey T.L."/>
            <person name="Bansal M."/>
            <person name="Baxter L."/>
            <person name="Beisel K.W."/>
            <person name="Bersano T."/>
            <person name="Bono H."/>
            <person name="Chalk A.M."/>
            <person name="Chiu K.P."/>
            <person name="Choudhary V."/>
            <person name="Christoffels A."/>
            <person name="Clutterbuck D.R."/>
            <person name="Crowe M.L."/>
            <person name="Dalla E."/>
            <person name="Dalrymple B.P."/>
            <person name="de Bono B."/>
            <person name="Della Gatta G."/>
            <person name="di Bernardo D."/>
            <person name="Down T."/>
            <person name="Engstrom P."/>
            <person name="Fagiolini M."/>
            <person name="Faulkner G."/>
            <person name="Fletcher C.F."/>
            <person name="Fukushima T."/>
            <person name="Furuno M."/>
            <person name="Futaki S."/>
            <person name="Gariboldi M."/>
            <person name="Georgii-Hemming P."/>
            <person name="Gingeras T.R."/>
            <person name="Gojobori T."/>
            <person name="Green R.E."/>
            <person name="Gustincich S."/>
            <person name="Harbers M."/>
            <person name="Hayashi Y."/>
            <person name="Hensch T.K."/>
            <person name="Hirokawa N."/>
            <person name="Hill D."/>
            <person name="Huminiecki L."/>
            <person name="Iacono M."/>
            <person name="Ikeo K."/>
            <person name="Iwama A."/>
            <person name="Ishikawa T."/>
            <person name="Jakt M."/>
            <person name="Kanapin A."/>
            <person name="Katoh M."/>
            <person name="Kawasawa Y."/>
            <person name="Kelso J."/>
            <person name="Kitamura H."/>
            <person name="Kitano H."/>
            <person name="Kollias G."/>
            <person name="Krishnan S.P."/>
            <person name="Kruger A."/>
            <person name="Kummerfeld S.K."/>
            <person name="Kurochkin I.V."/>
            <person name="Lareau L.F."/>
            <person name="Lazarevic D."/>
            <person name="Lipovich L."/>
            <person name="Liu J."/>
            <person name="Liuni S."/>
            <person name="McWilliam S."/>
            <person name="Madan Babu M."/>
            <person name="Madera M."/>
            <person name="Marchionni L."/>
            <person name="Matsuda H."/>
            <person name="Matsuzawa S."/>
            <person name="Miki H."/>
            <person name="Mignone F."/>
            <person name="Miyake S."/>
            <person name="Morris K."/>
            <person name="Mottagui-Tabar S."/>
            <person name="Mulder N."/>
            <person name="Nakano N."/>
            <person name="Nakauchi H."/>
            <person name="Ng P."/>
            <person name="Nilsson R."/>
            <person name="Nishiguchi S."/>
            <person name="Nishikawa S."/>
            <person name="Nori F."/>
            <person name="Ohara O."/>
            <person name="Okazaki Y."/>
            <person name="Orlando V."/>
            <person name="Pang K.C."/>
            <person name="Pavan W.J."/>
            <person name="Pavesi G."/>
            <person name="Pesole G."/>
            <person name="Petrovsky N."/>
            <person name="Piazza S."/>
            <person name="Reed J."/>
            <person name="Reid J.F."/>
            <person name="Ring B.Z."/>
            <person name="Ringwald M."/>
            <person name="Rost B."/>
            <person name="Ruan Y."/>
            <person name="Salzberg S.L."/>
            <person name="Sandelin A."/>
            <person name="Schneider C."/>
            <person name="Schoenbach C."/>
            <person name="Sekiguchi K."/>
            <person name="Semple C.A."/>
            <person name="Seno S."/>
            <person name="Sessa L."/>
            <person name="Sheng Y."/>
            <person name="Shibata Y."/>
            <person name="Shimada H."/>
            <person name="Shimada K."/>
            <person name="Silva D."/>
            <person name="Sinclair B."/>
            <person name="Sperling S."/>
            <person name="Stupka E."/>
            <person name="Sugiura K."/>
            <person name="Sultana R."/>
            <person name="Takenaka Y."/>
            <person name="Taki K."/>
            <person name="Tammoja K."/>
            <person name="Tan S.L."/>
            <person name="Tang S."/>
            <person name="Taylor M.S."/>
            <person name="Tegner J."/>
            <person name="Teichmann S.A."/>
            <person name="Ueda H.R."/>
            <person name="van Nimwegen E."/>
            <person name="Verardo R."/>
            <person name="Wei C.L."/>
            <person name="Yagi K."/>
            <person name="Yamanishi H."/>
            <person name="Zabarovsky E."/>
            <person name="Zhu S."/>
            <person name="Zimmer A."/>
            <person name="Hide W."/>
            <person name="Bult C."/>
            <person name="Grimmond S.M."/>
            <person name="Teasdale R.D."/>
            <person name="Liu E.T."/>
            <person name="Brusic V."/>
            <person name="Quackenbush J."/>
            <person name="Wahlestedt C."/>
            <person name="Mattick J.S."/>
            <person name="Hume D.A."/>
            <person name="Kai C."/>
            <person name="Sasaki D."/>
            <person name="Tomaru Y."/>
            <person name="Fukuda S."/>
            <person name="Kanamori-Katayama M."/>
            <person name="Suzuki M."/>
            <person name="Aoki J."/>
            <person name="Arakawa T."/>
            <person name="Iida J."/>
            <person name="Imamura K."/>
            <person name="Itoh M."/>
            <person name="Kato T."/>
            <person name="Kawaji H."/>
            <person name="Kawagashira N."/>
            <person name="Kawashima T."/>
            <person name="Kojima M."/>
            <person name="Kondo S."/>
            <person name="Konno H."/>
            <person name="Nakano K."/>
            <person name="Ninomiya N."/>
            <person name="Nishio T."/>
            <person name="Okada M."/>
            <person name="Plessy C."/>
            <person name="Shibata K."/>
            <person name="Shiraki T."/>
            <person name="Suzuki S."/>
            <person name="Tagami M."/>
            <person name="Waki K."/>
            <person name="Watahiki A."/>
            <person name="Okamura-Oho Y."/>
            <person name="Suzuki H."/>
            <person name="Kawai J."/>
            <person name="Hayashizaki Y."/>
        </authorList>
    </citation>
    <scope>NUCLEOTIDE SEQUENCE [LARGE SCALE MRNA] (ISOFORM 2)</scope>
    <source>
        <strain>C57BL/6J</strain>
        <tissue>Kidney</tissue>
    </source>
</reference>
<reference key="3">
    <citation type="journal article" date="2004" name="Genome Res.">
        <title>The status, quality, and expansion of the NIH full-length cDNA project: the Mammalian Gene Collection (MGC).</title>
        <authorList>
            <consortium name="The MGC Project Team"/>
        </authorList>
    </citation>
    <scope>NUCLEOTIDE SEQUENCE [LARGE SCALE MRNA] (ISOFORMS 1 AND 2)</scope>
    <source>
        <strain>FVB/N</strain>
        <tissue>Kidney</tissue>
        <tissue>Liver</tissue>
    </source>
</reference>
<reference key="4">
    <citation type="journal article" date="2005" name="Eur. J. Pharmacol.">
        <title>Mouse organic anion transporter 2 and 3 (mOAT2/3[Slc22a7/8]) mediates the renal transport of bumetanide.</title>
        <authorList>
            <person name="Kobayashi Y."/>
            <person name="Ohbayashi M."/>
            <person name="Kohyama N."/>
            <person name="Yamamoto T."/>
        </authorList>
    </citation>
    <scope>TISSUE SPECIFICITY</scope>
    <scope>SUBCELLULAR LOCATION</scope>
    <scope>MISCELLANEOUS</scope>
</reference>
<reference key="5">
    <citation type="journal article" date="2007" name="Am. J. Physiol.">
        <title>Renal expression of organic anion transporter OAT2 in rats and mice is regulated by sex hormones.</title>
        <authorList>
            <person name="Ljubojevic M."/>
            <person name="Balen D."/>
            <person name="Breljak D."/>
            <person name="Kusan M."/>
            <person name="Anzai N."/>
            <person name="Bahn A."/>
            <person name="Burckhardt G."/>
            <person name="Sabolic I."/>
        </authorList>
    </citation>
    <scope>TISSUE SPECIFICITY</scope>
</reference>
<reference key="6">
    <citation type="journal article" date="2010" name="Cell">
        <title>A tissue-specific atlas of mouse protein phosphorylation and expression.</title>
        <authorList>
            <person name="Huttlin E.L."/>
            <person name="Jedrychowski M.P."/>
            <person name="Elias J.E."/>
            <person name="Goswami T."/>
            <person name="Rad R."/>
            <person name="Beausoleil S.A."/>
            <person name="Villen J."/>
            <person name="Haas W."/>
            <person name="Sowa M.E."/>
            <person name="Gygi S.P."/>
        </authorList>
    </citation>
    <scope>IDENTIFICATION BY MASS SPECTROMETRY [LARGE SCALE ANALYSIS]</scope>
    <source>
        <tissue>Liver</tissue>
    </source>
</reference>
<name>S22A7_MOUSE</name>
<accession>Q91WU2</accession>
<accession>Q3UNX2</accession>
<accession>Q8BUQ9</accession>
<accession>Q8K4S9</accession>
<accession>Q8R0M7</accession>
<accession>Q8R125</accession>
<organism>
    <name type="scientific">Mus musculus</name>
    <name type="common">Mouse</name>
    <dbReference type="NCBI Taxonomy" id="10090"/>
    <lineage>
        <taxon>Eukaryota</taxon>
        <taxon>Metazoa</taxon>
        <taxon>Chordata</taxon>
        <taxon>Craniata</taxon>
        <taxon>Vertebrata</taxon>
        <taxon>Euteleostomi</taxon>
        <taxon>Mammalia</taxon>
        <taxon>Eutheria</taxon>
        <taxon>Euarchontoglires</taxon>
        <taxon>Glires</taxon>
        <taxon>Rodentia</taxon>
        <taxon>Myomorpha</taxon>
        <taxon>Muroidea</taxon>
        <taxon>Muridae</taxon>
        <taxon>Murinae</taxon>
        <taxon>Mus</taxon>
        <taxon>Mus</taxon>
    </lineage>
</organism>
<sequence>MGFEELLHKVGGFGPFQLRNLVLLALPRFLLPMHFLLPIFMAAVPAHHCALPDAPANLSHQDLWLKTHLPRETDGSFSSCLRFAYPQALPNVTLGTEVYNSGEPEGEPLTVPCSQGWEYDRSEFSSTIATEWDLVCEQRGLNKVTSTCFFIGVLLGAVVYGYLSDRFGRRRLLLVAYVSTLALGLMSAASVNYIMFVTTRMLTGSALAGFTIIVLPLELEWLDVEHRTVAGVISTTFWTGGVLLLTLVGYLIRSWRWLLLAATLPCVPGIISIWWVPESARWLLTQGRVEEAKKYLSICAKLNGRPISEDSLSQEALNKVITMERVSQRPSYLDLFRTSQLRHVSLCCMMMWFGVNFSYYGLTLDASGLGLTVYQTQLLFGAVEVPSKITVFFLVRLVGRRLTEAGMLLATALTFGISLLVSSDTKSWITALVVIGKAFSEAAFTTAYLFTSELYPTVLRQTGMGFTALIGRLGASLAPLVVLLDGVWLLLPKLAYGGISFLAACTVLLLPETKKAQLPETIQDVERKGRKIDRSGTELA</sequence>
<evidence type="ECO:0000250" key="1">
    <source>
        <dbReference type="UniProtKB" id="Q9Y694"/>
    </source>
</evidence>
<evidence type="ECO:0000255" key="2"/>
<evidence type="ECO:0000269" key="3">
    <source>
    </source>
</evidence>
<evidence type="ECO:0000269" key="4">
    <source>
    </source>
</evidence>
<evidence type="ECO:0000269" key="5">
    <source>
    </source>
</evidence>
<evidence type="ECO:0000303" key="6">
    <source>
    </source>
</evidence>
<evidence type="ECO:0000303" key="7">
    <source>
    </source>
</evidence>
<evidence type="ECO:0000303" key="8">
    <source>
    </source>
</evidence>
<evidence type="ECO:0000305" key="9"/>
<evidence type="ECO:0000305" key="10">
    <source>
    </source>
</evidence>
<evidence type="ECO:0000312" key="11">
    <source>
        <dbReference type="MGI" id="MGI:1859559"/>
    </source>
</evidence>
<dbReference type="EMBL" id="AB069965">
    <property type="protein sequence ID" value="BAC02736.1"/>
    <property type="molecule type" value="mRNA"/>
</dbReference>
<dbReference type="EMBL" id="AK082865">
    <property type="protein sequence ID" value="BAC38659.1"/>
    <property type="molecule type" value="mRNA"/>
</dbReference>
<dbReference type="EMBL" id="AK143949">
    <property type="protein sequence ID" value="BAE25625.1"/>
    <property type="molecule type" value="mRNA"/>
</dbReference>
<dbReference type="EMBL" id="BC013474">
    <property type="protein sequence ID" value="AAH13474.1"/>
    <property type="molecule type" value="mRNA"/>
</dbReference>
<dbReference type="EMBL" id="BC024119">
    <property type="protein sequence ID" value="AAH24119.1"/>
    <property type="molecule type" value="mRNA"/>
</dbReference>
<dbReference type="EMBL" id="BC025813">
    <property type="protein sequence ID" value="AAH25813.1"/>
    <property type="molecule type" value="mRNA"/>
</dbReference>
<dbReference type="EMBL" id="BC026598">
    <property type="protein sequence ID" value="AAH26598.1"/>
    <property type="molecule type" value="mRNA"/>
</dbReference>
<dbReference type="EMBL" id="BC026597">
    <property type="protein sequence ID" value="AAH26597.1"/>
    <property type="molecule type" value="mRNA"/>
</dbReference>
<dbReference type="CCDS" id="CCDS28829.1">
    <molecule id="Q91WU2-1"/>
</dbReference>
<dbReference type="RefSeq" id="NP_659105.2">
    <property type="nucleotide sequence ID" value="NM_144856.2"/>
</dbReference>
<dbReference type="SMR" id="Q91WU2"/>
<dbReference type="FunCoup" id="Q91WU2">
    <property type="interactions" value="55"/>
</dbReference>
<dbReference type="STRING" id="10090.ENSMUSP00000084234"/>
<dbReference type="ChEMBL" id="CHEMBL2073716"/>
<dbReference type="iPTMnet" id="Q91WU2"/>
<dbReference type="PhosphoSitePlus" id="Q91WU2"/>
<dbReference type="jPOST" id="Q91WU2"/>
<dbReference type="PaxDb" id="10090-ENSMUSP00000084234"/>
<dbReference type="ProteomicsDB" id="260755">
    <molecule id="Q91WU2-1"/>
</dbReference>
<dbReference type="ProteomicsDB" id="260756">
    <molecule id="Q91WU2-2"/>
</dbReference>
<dbReference type="DNASU" id="108114"/>
<dbReference type="GeneID" id="108114"/>
<dbReference type="KEGG" id="mmu:108114"/>
<dbReference type="UCSC" id="uc008csw.2">
    <molecule id="Q91WU2-1"/>
    <property type="organism name" value="mouse"/>
</dbReference>
<dbReference type="AGR" id="MGI:1859559"/>
<dbReference type="CTD" id="10864"/>
<dbReference type="MGI" id="MGI:1859559">
    <property type="gene designation" value="Slc22a7"/>
</dbReference>
<dbReference type="eggNOG" id="KOG0255">
    <property type="taxonomic scope" value="Eukaryota"/>
</dbReference>
<dbReference type="InParanoid" id="Q91WU2"/>
<dbReference type="OrthoDB" id="2544694at2759"/>
<dbReference type="PhylomeDB" id="Q91WU2"/>
<dbReference type="TreeFam" id="TF315847"/>
<dbReference type="Reactome" id="R-MMU-561048">
    <property type="pathway name" value="Organic anion transport"/>
</dbReference>
<dbReference type="Reactome" id="R-MMU-9749641">
    <property type="pathway name" value="Aspirin ADME"/>
</dbReference>
<dbReference type="SABIO-RK" id="Q91WU2"/>
<dbReference type="BioGRID-ORCS" id="108114">
    <property type="hits" value="1 hit in 76 CRISPR screens"/>
</dbReference>
<dbReference type="PRO" id="PR:Q91WU2"/>
<dbReference type="Proteomes" id="UP000000589">
    <property type="component" value="Unplaced"/>
</dbReference>
<dbReference type="RNAct" id="Q91WU2">
    <property type="molecule type" value="protein"/>
</dbReference>
<dbReference type="GO" id="GO:0016324">
    <property type="term" value="C:apical plasma membrane"/>
    <property type="evidence" value="ECO:0000314"/>
    <property type="project" value="UniProtKB"/>
</dbReference>
<dbReference type="GO" id="GO:0009925">
    <property type="term" value="C:basal plasma membrane"/>
    <property type="evidence" value="ECO:0000250"/>
    <property type="project" value="UniProtKB"/>
</dbReference>
<dbReference type="GO" id="GO:0016323">
    <property type="term" value="C:basolateral plasma membrane"/>
    <property type="evidence" value="ECO:0000250"/>
    <property type="project" value="UniProtKB"/>
</dbReference>
<dbReference type="GO" id="GO:0005886">
    <property type="term" value="C:plasma membrane"/>
    <property type="evidence" value="ECO:0000304"/>
    <property type="project" value="MGI"/>
</dbReference>
<dbReference type="GO" id="GO:0015139">
    <property type="term" value="F:alpha-ketoglutarate transmembrane transporter activity"/>
    <property type="evidence" value="ECO:0000314"/>
    <property type="project" value="UniProtKB"/>
</dbReference>
<dbReference type="GO" id="GO:0008514">
    <property type="term" value="F:organic anion transmembrane transporter activity"/>
    <property type="evidence" value="ECO:0000314"/>
    <property type="project" value="UniProtKB"/>
</dbReference>
<dbReference type="GO" id="GO:0015132">
    <property type="term" value="F:prostaglandin transmembrane transporter activity"/>
    <property type="evidence" value="ECO:0000314"/>
    <property type="project" value="UniProtKB"/>
</dbReference>
<dbReference type="GO" id="GO:0015347">
    <property type="term" value="F:sodium-independent organic anion transmembrane transporter activity"/>
    <property type="evidence" value="ECO:0000250"/>
    <property type="project" value="UniProtKB"/>
</dbReference>
<dbReference type="GO" id="GO:0015742">
    <property type="term" value="P:alpha-ketoglutarate transport"/>
    <property type="evidence" value="ECO:0000314"/>
    <property type="project" value="UniProtKB"/>
</dbReference>
<dbReference type="GO" id="GO:0006811">
    <property type="term" value="P:monoatomic ion transport"/>
    <property type="evidence" value="ECO:0007669"/>
    <property type="project" value="UniProtKB-KW"/>
</dbReference>
<dbReference type="GO" id="GO:0015711">
    <property type="term" value="P:organic anion transport"/>
    <property type="evidence" value="ECO:0000304"/>
    <property type="project" value="MGI"/>
</dbReference>
<dbReference type="GO" id="GO:0015732">
    <property type="term" value="P:prostaglandin transport"/>
    <property type="evidence" value="ECO:0000314"/>
    <property type="project" value="UniProtKB"/>
</dbReference>
<dbReference type="GO" id="GO:0035634">
    <property type="term" value="P:response to stilbenoid"/>
    <property type="evidence" value="ECO:0000270"/>
    <property type="project" value="UniProtKB"/>
</dbReference>
<dbReference type="FunFam" id="1.20.1250.20:FF:000170">
    <property type="entry name" value="Solute carrier family 22 member 7"/>
    <property type="match status" value="1"/>
</dbReference>
<dbReference type="Gene3D" id="1.20.1250.20">
    <property type="entry name" value="MFS general substrate transporter like domains"/>
    <property type="match status" value="1"/>
</dbReference>
<dbReference type="InterPro" id="IPR020846">
    <property type="entry name" value="MFS_dom"/>
</dbReference>
<dbReference type="InterPro" id="IPR005828">
    <property type="entry name" value="MFS_sugar_transport-like"/>
</dbReference>
<dbReference type="InterPro" id="IPR036259">
    <property type="entry name" value="MFS_trans_sf"/>
</dbReference>
<dbReference type="InterPro" id="IPR004749">
    <property type="entry name" value="Orgcat_transp/SVOP"/>
</dbReference>
<dbReference type="NCBIfam" id="TIGR00898">
    <property type="entry name" value="2A0119"/>
    <property type="match status" value="1"/>
</dbReference>
<dbReference type="PANTHER" id="PTHR24064">
    <property type="entry name" value="SOLUTE CARRIER FAMILY 22 MEMBER"/>
    <property type="match status" value="1"/>
</dbReference>
<dbReference type="Pfam" id="PF00083">
    <property type="entry name" value="Sugar_tr"/>
    <property type="match status" value="1"/>
</dbReference>
<dbReference type="SUPFAM" id="SSF103473">
    <property type="entry name" value="MFS general substrate transporter"/>
    <property type="match status" value="1"/>
</dbReference>
<dbReference type="PROSITE" id="PS50850">
    <property type="entry name" value="MFS"/>
    <property type="match status" value="1"/>
</dbReference>
<feature type="chain" id="PRO_0000317482" description="Solute carrier family 22 member 7">
    <location>
        <begin position="1"/>
        <end position="540"/>
    </location>
</feature>
<feature type="transmembrane region" description="Helical" evidence="2">
    <location>
        <begin position="21"/>
        <end position="41"/>
    </location>
</feature>
<feature type="transmembrane region" description="Helical" evidence="2">
    <location>
        <begin position="144"/>
        <end position="164"/>
    </location>
</feature>
<feature type="transmembrane region" description="Helical" evidence="2">
    <location>
        <begin position="172"/>
        <end position="192"/>
    </location>
</feature>
<feature type="transmembrane region" description="Helical" evidence="2">
    <location>
        <begin position="202"/>
        <end position="222"/>
    </location>
</feature>
<feature type="transmembrane region" description="Helical" evidence="2">
    <location>
        <begin position="232"/>
        <end position="252"/>
    </location>
</feature>
<feature type="transmembrane region" description="Helical" evidence="2">
    <location>
        <begin position="257"/>
        <end position="277"/>
    </location>
</feature>
<feature type="transmembrane region" description="Helical" evidence="2">
    <location>
        <begin position="344"/>
        <end position="364"/>
    </location>
</feature>
<feature type="transmembrane region" description="Helical" evidence="2">
    <location>
        <begin position="378"/>
        <end position="398"/>
    </location>
</feature>
<feature type="transmembrane region" description="Helical" evidence="2">
    <location>
        <begin position="402"/>
        <end position="422"/>
    </location>
</feature>
<feature type="transmembrane region" description="Helical" evidence="2">
    <location>
        <begin position="429"/>
        <end position="449"/>
    </location>
</feature>
<feature type="transmembrane region" description="Helical" evidence="2">
    <location>
        <begin position="462"/>
        <end position="484"/>
    </location>
</feature>
<feature type="transmembrane region" description="Helical" evidence="2">
    <location>
        <begin position="488"/>
        <end position="510"/>
    </location>
</feature>
<feature type="splice variant" id="VSP_030995" description="In isoform 2." evidence="6 7">
    <location>
        <begin position="1"/>
        <end position="124"/>
    </location>
</feature>
<feature type="splice variant" id="VSP_030996" description="In isoform 2." evidence="6 7">
    <original>SSTIATE</original>
    <variation>MGESSET</variation>
    <location>
        <begin position="125"/>
        <end position="131"/>
    </location>
</feature>
<feature type="sequence conflict" description="In Ref. 1; BAC02736." evidence="9" ref="1">
    <original>A</original>
    <variation>T</variation>
    <location>
        <position position="46"/>
    </location>
</feature>
<feature type="sequence conflict" description="In Ref. 1; BAC02736." evidence="9" ref="1">
    <original>R</original>
    <variation>H</variation>
    <location>
        <position position="82"/>
    </location>
</feature>
<feature type="sequence conflict" description="In Ref. 2; BAC38659." evidence="9" ref="2">
    <original>Y</original>
    <variation>C</variation>
    <location>
        <position position="85"/>
    </location>
</feature>
<feature type="sequence conflict" description="In Ref. 2; BAC38659/BAE25625." evidence="9" ref="2">
    <original>E</original>
    <variation>Q</variation>
    <location>
        <position position="137"/>
    </location>
</feature>
<feature type="sequence conflict" description="In Ref. 2; BAC38659." evidence="9" ref="2">
    <original>Y</original>
    <variation>N</variation>
    <location>
        <position position="193"/>
    </location>
</feature>
<feature type="sequence conflict" description="In Ref. 3; AAH26598." evidence="9" ref="3">
    <original>W</original>
    <variation>S</variation>
    <location>
        <position position="255"/>
    </location>
</feature>
<keyword id="KW-0025">Alternative splicing</keyword>
<keyword id="KW-1003">Cell membrane</keyword>
<keyword id="KW-0406">Ion transport</keyword>
<keyword id="KW-0472">Membrane</keyword>
<keyword id="KW-1185">Reference proteome</keyword>
<keyword id="KW-0812">Transmembrane</keyword>
<keyword id="KW-1133">Transmembrane helix</keyword>
<keyword id="KW-0813">Transport</keyword>
<gene>
    <name evidence="11" type="primary">Slc22a7</name>
    <name type="synonym">Oat2</name>
</gene>